<reference key="1">
    <citation type="journal article" date="2001" name="Lancet">
        <title>Whole genome sequencing of meticillin-resistant Staphylococcus aureus.</title>
        <authorList>
            <person name="Kuroda M."/>
            <person name="Ohta T."/>
            <person name="Uchiyama I."/>
            <person name="Baba T."/>
            <person name="Yuzawa H."/>
            <person name="Kobayashi I."/>
            <person name="Cui L."/>
            <person name="Oguchi A."/>
            <person name="Aoki K."/>
            <person name="Nagai Y."/>
            <person name="Lian J.-Q."/>
            <person name="Ito T."/>
            <person name="Kanamori M."/>
            <person name="Matsumaru H."/>
            <person name="Maruyama A."/>
            <person name="Murakami H."/>
            <person name="Hosoyama A."/>
            <person name="Mizutani-Ui Y."/>
            <person name="Takahashi N.K."/>
            <person name="Sawano T."/>
            <person name="Inoue R."/>
            <person name="Kaito C."/>
            <person name="Sekimizu K."/>
            <person name="Hirakawa H."/>
            <person name="Kuhara S."/>
            <person name="Goto S."/>
            <person name="Yabuzaki J."/>
            <person name="Kanehisa M."/>
            <person name="Yamashita A."/>
            <person name="Oshima K."/>
            <person name="Furuya K."/>
            <person name="Yoshino C."/>
            <person name="Shiba T."/>
            <person name="Hattori M."/>
            <person name="Ogasawara N."/>
            <person name="Hayashi H."/>
            <person name="Hiramatsu K."/>
        </authorList>
    </citation>
    <scope>NUCLEOTIDE SEQUENCE [LARGE SCALE GENOMIC DNA]</scope>
    <source>
        <strain>N315</strain>
    </source>
</reference>
<reference key="2">
    <citation type="submission" date="2005-11" db="UniProtKB">
        <title>Shotgun proteomic analysis of total protein extract of S. aureus S30 versus N315.</title>
        <authorList>
            <person name="Stenz L."/>
        </authorList>
    </citation>
    <scope>IDENTIFICATION BY MASS SPECTROMETRY</scope>
</reference>
<reference key="3">
    <citation type="submission" date="2007-10" db="UniProtKB">
        <title>Shotgun proteomic analysis of total and membrane protein extracts of S. aureus strain N315.</title>
        <authorList>
            <person name="Vaezzadeh A.R."/>
            <person name="Deshusses J."/>
            <person name="Lescuyer P."/>
            <person name="Hochstrasser D.F."/>
        </authorList>
    </citation>
    <scope>IDENTIFICATION BY MASS SPECTROMETRY [LARGE SCALE ANALYSIS]</scope>
    <source>
        <strain>N315</strain>
    </source>
</reference>
<keyword id="KW-0021">Allosteric enzyme</keyword>
<keyword id="KW-0328">Glycosyltransferase</keyword>
<keyword id="KW-0342">GTP-binding</keyword>
<keyword id="KW-0460">Magnesium</keyword>
<keyword id="KW-0547">Nucleotide-binding</keyword>
<keyword id="KW-0808">Transferase</keyword>
<comment type="function">
    <text evidence="1">Catalyzes the conversion of uracil and 5-phospho-alpha-D-ribose 1-diphosphate (PRPP) to UMP and diphosphate.</text>
</comment>
<comment type="catalytic activity">
    <reaction evidence="1">
        <text>UMP + diphosphate = 5-phospho-alpha-D-ribose 1-diphosphate + uracil</text>
        <dbReference type="Rhea" id="RHEA:13017"/>
        <dbReference type="ChEBI" id="CHEBI:17568"/>
        <dbReference type="ChEBI" id="CHEBI:33019"/>
        <dbReference type="ChEBI" id="CHEBI:57865"/>
        <dbReference type="ChEBI" id="CHEBI:58017"/>
        <dbReference type="EC" id="2.4.2.9"/>
    </reaction>
</comment>
<comment type="cofactor">
    <cofactor evidence="1">
        <name>Mg(2+)</name>
        <dbReference type="ChEBI" id="CHEBI:18420"/>
    </cofactor>
    <text evidence="1">Binds 1 Mg(2+) ion per subunit. The magnesium is bound as Mg-PRPP.</text>
</comment>
<comment type="activity regulation">
    <text evidence="1">Allosterically activated by GTP.</text>
</comment>
<comment type="pathway">
    <text evidence="1">Pyrimidine metabolism; UMP biosynthesis via salvage pathway; UMP from uracil: step 1/1.</text>
</comment>
<comment type="similarity">
    <text evidence="1">Belongs to the UPRTase family.</text>
</comment>
<protein>
    <recommendedName>
        <fullName evidence="1">Uracil phosphoribosyltransferase</fullName>
        <ecNumber evidence="1">2.4.2.9</ecNumber>
    </recommendedName>
    <alternativeName>
        <fullName evidence="1">UMP pyrophosphorylase</fullName>
    </alternativeName>
    <alternativeName>
        <fullName evidence="1">UPRTase</fullName>
    </alternativeName>
</protein>
<feature type="chain" id="PRO_0000120881" description="Uracil phosphoribosyltransferase">
    <location>
        <begin position="1"/>
        <end position="209"/>
    </location>
</feature>
<feature type="binding site" evidence="1">
    <location>
        <position position="79"/>
    </location>
    <ligand>
        <name>5-phospho-alpha-D-ribose 1-diphosphate</name>
        <dbReference type="ChEBI" id="CHEBI:58017"/>
    </ligand>
</feature>
<feature type="binding site" evidence="1">
    <location>
        <position position="104"/>
    </location>
    <ligand>
        <name>5-phospho-alpha-D-ribose 1-diphosphate</name>
        <dbReference type="ChEBI" id="CHEBI:58017"/>
    </ligand>
</feature>
<feature type="binding site" evidence="1">
    <location>
        <begin position="131"/>
        <end position="139"/>
    </location>
    <ligand>
        <name>5-phospho-alpha-D-ribose 1-diphosphate</name>
        <dbReference type="ChEBI" id="CHEBI:58017"/>
    </ligand>
</feature>
<feature type="binding site" evidence="1">
    <location>
        <position position="194"/>
    </location>
    <ligand>
        <name>uracil</name>
        <dbReference type="ChEBI" id="CHEBI:17568"/>
    </ligand>
</feature>
<feature type="binding site" evidence="1">
    <location>
        <begin position="199"/>
        <end position="201"/>
    </location>
    <ligand>
        <name>uracil</name>
        <dbReference type="ChEBI" id="CHEBI:17568"/>
    </ligand>
</feature>
<feature type="binding site" evidence="1">
    <location>
        <position position="200"/>
    </location>
    <ligand>
        <name>5-phospho-alpha-D-ribose 1-diphosphate</name>
        <dbReference type="ChEBI" id="CHEBI:58017"/>
    </ligand>
</feature>
<gene>
    <name evidence="1" type="primary">upp</name>
    <name type="ordered locus">SA1914</name>
</gene>
<evidence type="ECO:0000255" key="1">
    <source>
        <dbReference type="HAMAP-Rule" id="MF_01218"/>
    </source>
</evidence>
<proteinExistence type="evidence at protein level"/>
<dbReference type="EC" id="2.4.2.9" evidence="1"/>
<dbReference type="EMBL" id="BA000018">
    <property type="protein sequence ID" value="BAB43198.1"/>
    <property type="molecule type" value="Genomic_DNA"/>
</dbReference>
<dbReference type="PIR" id="E90004">
    <property type="entry name" value="E90004"/>
</dbReference>
<dbReference type="RefSeq" id="WP_000048712.1">
    <property type="nucleotide sequence ID" value="NC_002745.2"/>
</dbReference>
<dbReference type="SMR" id="P67396"/>
<dbReference type="EnsemblBacteria" id="BAB43198">
    <property type="protein sequence ID" value="BAB43198"/>
    <property type="gene ID" value="BAB43198"/>
</dbReference>
<dbReference type="KEGG" id="sau:SA1914"/>
<dbReference type="HOGENOM" id="CLU_067096_2_2_9"/>
<dbReference type="UniPathway" id="UPA00574">
    <property type="reaction ID" value="UER00636"/>
</dbReference>
<dbReference type="GO" id="GO:0005525">
    <property type="term" value="F:GTP binding"/>
    <property type="evidence" value="ECO:0007669"/>
    <property type="project" value="UniProtKB-KW"/>
</dbReference>
<dbReference type="GO" id="GO:0000287">
    <property type="term" value="F:magnesium ion binding"/>
    <property type="evidence" value="ECO:0007669"/>
    <property type="project" value="UniProtKB-UniRule"/>
</dbReference>
<dbReference type="GO" id="GO:0004845">
    <property type="term" value="F:uracil phosphoribosyltransferase activity"/>
    <property type="evidence" value="ECO:0007669"/>
    <property type="project" value="UniProtKB-UniRule"/>
</dbReference>
<dbReference type="GO" id="GO:0044206">
    <property type="term" value="P:UMP salvage"/>
    <property type="evidence" value="ECO:0007669"/>
    <property type="project" value="UniProtKB-UniRule"/>
</dbReference>
<dbReference type="GO" id="GO:0006223">
    <property type="term" value="P:uracil salvage"/>
    <property type="evidence" value="ECO:0007669"/>
    <property type="project" value="InterPro"/>
</dbReference>
<dbReference type="CDD" id="cd06223">
    <property type="entry name" value="PRTases_typeI"/>
    <property type="match status" value="1"/>
</dbReference>
<dbReference type="FunFam" id="3.40.50.2020:FF:000003">
    <property type="entry name" value="Uracil phosphoribosyltransferase"/>
    <property type="match status" value="1"/>
</dbReference>
<dbReference type="Gene3D" id="3.40.50.2020">
    <property type="match status" value="1"/>
</dbReference>
<dbReference type="HAMAP" id="MF_01218_B">
    <property type="entry name" value="Upp_B"/>
    <property type="match status" value="1"/>
</dbReference>
<dbReference type="InterPro" id="IPR000836">
    <property type="entry name" value="PRibTrfase_dom"/>
</dbReference>
<dbReference type="InterPro" id="IPR029057">
    <property type="entry name" value="PRTase-like"/>
</dbReference>
<dbReference type="InterPro" id="IPR034332">
    <property type="entry name" value="Upp_B"/>
</dbReference>
<dbReference type="InterPro" id="IPR050054">
    <property type="entry name" value="UPRTase/APRTase"/>
</dbReference>
<dbReference type="InterPro" id="IPR005765">
    <property type="entry name" value="Ura_phspho_trans"/>
</dbReference>
<dbReference type="NCBIfam" id="NF001097">
    <property type="entry name" value="PRK00129.1"/>
    <property type="match status" value="1"/>
</dbReference>
<dbReference type="NCBIfam" id="TIGR01091">
    <property type="entry name" value="upp"/>
    <property type="match status" value="1"/>
</dbReference>
<dbReference type="PANTHER" id="PTHR32315">
    <property type="entry name" value="ADENINE PHOSPHORIBOSYLTRANSFERASE"/>
    <property type="match status" value="1"/>
</dbReference>
<dbReference type="PANTHER" id="PTHR32315:SF4">
    <property type="entry name" value="URACIL PHOSPHORIBOSYLTRANSFERASE, CHLOROPLASTIC"/>
    <property type="match status" value="1"/>
</dbReference>
<dbReference type="Pfam" id="PF14681">
    <property type="entry name" value="UPRTase"/>
    <property type="match status" value="1"/>
</dbReference>
<dbReference type="SUPFAM" id="SSF53271">
    <property type="entry name" value="PRTase-like"/>
    <property type="match status" value="1"/>
</dbReference>
<accession>P67396</accession>
<accession>P58999</accession>
<accession>Q99SE6</accession>
<organism>
    <name type="scientific">Staphylococcus aureus (strain N315)</name>
    <dbReference type="NCBI Taxonomy" id="158879"/>
    <lineage>
        <taxon>Bacteria</taxon>
        <taxon>Bacillati</taxon>
        <taxon>Bacillota</taxon>
        <taxon>Bacilli</taxon>
        <taxon>Bacillales</taxon>
        <taxon>Staphylococcaceae</taxon>
        <taxon>Staphylococcus</taxon>
    </lineage>
</organism>
<sequence>MSKVHVFDHPLIQHKLSYIRDVNTGTKEFRELVDEVGMLMAYEVTRDLELQDVDIETPVTKMTAKRLAGKKLAIVPILRAGLGMTDGILSLVPAARVGHIGLYRDPETLKAVEYFAKLPQDITERQIIVVDPMLATGASAIEAITSLKKRGAKNIRFMCLIAAPEGVEKMHEAHPDVDIYIAALDEKLNDKAYITPGLGDAGDRLFGTK</sequence>
<name>UPP_STAAN</name>